<evidence type="ECO:0000250" key="1">
    <source>
        <dbReference type="UniProtKB" id="C4M1P9"/>
    </source>
</evidence>
<evidence type="ECO:0000250" key="2">
    <source>
        <dbReference type="UniProtKB" id="P24309"/>
    </source>
</evidence>
<evidence type="ECO:0000256" key="3">
    <source>
        <dbReference type="SAM" id="MobiDB-lite"/>
    </source>
</evidence>
<evidence type="ECO:0000269" key="4">
    <source>
    </source>
</evidence>
<evidence type="ECO:0000305" key="5"/>
<evidence type="ECO:0000312" key="6">
    <source>
        <dbReference type="PomBase" id="SPAC17A5.02c"/>
    </source>
</evidence>
<comment type="function">
    <text evidence="2">Cleaves the 2'-5' phosphodiester linkage at the branch point of lariat intron pre-mRNAs after splicing and converts them into linear molecules that are subsequently degraded, thereby facilitating ribonucleotide turnover.</text>
</comment>
<comment type="cofactor">
    <cofactor evidence="2">
        <name>Fe(2+)</name>
        <dbReference type="ChEBI" id="CHEBI:29033"/>
    </cofactor>
    <cofactor evidence="2">
        <name>Zn(2+)</name>
        <dbReference type="ChEBI" id="CHEBI:29105"/>
    </cofactor>
    <cofactor evidence="2">
        <name>Mn(2+)</name>
        <dbReference type="ChEBI" id="CHEBI:29035"/>
    </cofactor>
    <text evidence="2">Binds 2 divalent metal cations.</text>
</comment>
<comment type="activity regulation">
    <text evidence="2">Active in presence of diverse metals including Fe(2+), Zn(2+) and Mn(2+). Binds two metal cations in two adjacent alpha and beta metal-binding pockets.</text>
</comment>
<comment type="subcellular location">
    <subcellularLocation>
        <location evidence="4">Nucleus</location>
    </subcellularLocation>
    <subcellularLocation>
        <location evidence="2">Cytoplasm</location>
    </subcellularLocation>
</comment>
<comment type="similarity">
    <text evidence="5">Belongs to the lariat debranching enzyme family.</text>
</comment>
<comment type="sequence caution" evidence="5">
    <conflict type="erroneous initiation">
        <sequence resource="EMBL-CDS" id="AAC49619"/>
    </conflict>
    <text>Extended N-terminus.</text>
</comment>
<accession>O13765</accession>
<accession>A0AAN2H8X1</accession>
<accession>P78964</accession>
<name>DBR1_SCHPO</name>
<reference key="1">
    <citation type="journal article" date="1997" name="Mol. Cell. Biol.">
        <title>Severe growth defect in a Schizosaccharomyces pombe mutant defective in intron lariat degradation.</title>
        <authorList>
            <person name="Nam K."/>
            <person name="Lee G."/>
            <person name="Trambley J."/>
            <person name="Devine S.E."/>
            <person name="Boeke J.D."/>
        </authorList>
    </citation>
    <scope>NUCLEOTIDE SEQUENCE [GENOMIC DNA]</scope>
</reference>
<reference key="2">
    <citation type="submission" date="1999-10" db="EMBL/GenBank/DDBJ databases">
        <authorList>
            <person name="Nam K."/>
        </authorList>
    </citation>
    <scope>SEQUENCE REVISION</scope>
</reference>
<reference key="3">
    <citation type="journal article" date="2002" name="Nature">
        <title>The genome sequence of Schizosaccharomyces pombe.</title>
        <authorList>
            <person name="Wood V."/>
            <person name="Gwilliam R."/>
            <person name="Rajandream M.A."/>
            <person name="Lyne M.H."/>
            <person name="Lyne R."/>
            <person name="Stewart A."/>
            <person name="Sgouros J.G."/>
            <person name="Peat N."/>
            <person name="Hayles J."/>
            <person name="Baker S.G."/>
            <person name="Basham D."/>
            <person name="Bowman S."/>
            <person name="Brooks K."/>
            <person name="Brown D."/>
            <person name="Brown S."/>
            <person name="Chillingworth T."/>
            <person name="Churcher C.M."/>
            <person name="Collins M."/>
            <person name="Connor R."/>
            <person name="Cronin A."/>
            <person name="Davis P."/>
            <person name="Feltwell T."/>
            <person name="Fraser A."/>
            <person name="Gentles S."/>
            <person name="Goble A."/>
            <person name="Hamlin N."/>
            <person name="Harris D.E."/>
            <person name="Hidalgo J."/>
            <person name="Hodgson G."/>
            <person name="Holroyd S."/>
            <person name="Hornsby T."/>
            <person name="Howarth S."/>
            <person name="Huckle E.J."/>
            <person name="Hunt S."/>
            <person name="Jagels K."/>
            <person name="James K.D."/>
            <person name="Jones L."/>
            <person name="Jones M."/>
            <person name="Leather S."/>
            <person name="McDonald S."/>
            <person name="McLean J."/>
            <person name="Mooney P."/>
            <person name="Moule S."/>
            <person name="Mungall K.L."/>
            <person name="Murphy L.D."/>
            <person name="Niblett D."/>
            <person name="Odell C."/>
            <person name="Oliver K."/>
            <person name="O'Neil S."/>
            <person name="Pearson D."/>
            <person name="Quail M.A."/>
            <person name="Rabbinowitsch E."/>
            <person name="Rutherford K.M."/>
            <person name="Rutter S."/>
            <person name="Saunders D."/>
            <person name="Seeger K."/>
            <person name="Sharp S."/>
            <person name="Skelton J."/>
            <person name="Simmonds M.N."/>
            <person name="Squares R."/>
            <person name="Squares S."/>
            <person name="Stevens K."/>
            <person name="Taylor K."/>
            <person name="Taylor R.G."/>
            <person name="Tivey A."/>
            <person name="Walsh S.V."/>
            <person name="Warren T."/>
            <person name="Whitehead S."/>
            <person name="Woodward J.R."/>
            <person name="Volckaert G."/>
            <person name="Aert R."/>
            <person name="Robben J."/>
            <person name="Grymonprez B."/>
            <person name="Weltjens I."/>
            <person name="Vanstreels E."/>
            <person name="Rieger M."/>
            <person name="Schaefer M."/>
            <person name="Mueller-Auer S."/>
            <person name="Gabel C."/>
            <person name="Fuchs M."/>
            <person name="Duesterhoeft A."/>
            <person name="Fritzc C."/>
            <person name="Holzer E."/>
            <person name="Moestl D."/>
            <person name="Hilbert H."/>
            <person name="Borzym K."/>
            <person name="Langer I."/>
            <person name="Beck A."/>
            <person name="Lehrach H."/>
            <person name="Reinhardt R."/>
            <person name="Pohl T.M."/>
            <person name="Eger P."/>
            <person name="Zimmermann W."/>
            <person name="Wedler H."/>
            <person name="Wambutt R."/>
            <person name="Purnelle B."/>
            <person name="Goffeau A."/>
            <person name="Cadieu E."/>
            <person name="Dreano S."/>
            <person name="Gloux S."/>
            <person name="Lelaure V."/>
            <person name="Mottier S."/>
            <person name="Galibert F."/>
            <person name="Aves S.J."/>
            <person name="Xiang Z."/>
            <person name="Hunt C."/>
            <person name="Moore K."/>
            <person name="Hurst S.M."/>
            <person name="Lucas M."/>
            <person name="Rochet M."/>
            <person name="Gaillardin C."/>
            <person name="Tallada V.A."/>
            <person name="Garzon A."/>
            <person name="Thode G."/>
            <person name="Daga R.R."/>
            <person name="Cruzado L."/>
            <person name="Jimenez J."/>
            <person name="Sanchez M."/>
            <person name="del Rey F."/>
            <person name="Benito J."/>
            <person name="Dominguez A."/>
            <person name="Revuelta J.L."/>
            <person name="Moreno S."/>
            <person name="Armstrong J."/>
            <person name="Forsburg S.L."/>
            <person name="Cerutti L."/>
            <person name="Lowe T."/>
            <person name="McCombie W.R."/>
            <person name="Paulsen I."/>
            <person name="Potashkin J."/>
            <person name="Shpakovski G.V."/>
            <person name="Ussery D."/>
            <person name="Barrell B.G."/>
            <person name="Nurse P."/>
        </authorList>
    </citation>
    <scope>NUCLEOTIDE SEQUENCE [LARGE SCALE GENOMIC DNA]</scope>
    <source>
        <strain>972 / ATCC 24843</strain>
    </source>
</reference>
<reference key="4">
    <citation type="journal article" date="2006" name="Nat. Biotechnol.">
        <title>ORFeome cloning and global analysis of protein localization in the fission yeast Schizosaccharomyces pombe.</title>
        <authorList>
            <person name="Matsuyama A."/>
            <person name="Arai R."/>
            <person name="Yashiroda Y."/>
            <person name="Shirai A."/>
            <person name="Kamata A."/>
            <person name="Sekido S."/>
            <person name="Kobayashi Y."/>
            <person name="Hashimoto A."/>
            <person name="Hamamoto M."/>
            <person name="Hiraoka Y."/>
            <person name="Horinouchi S."/>
            <person name="Yoshida M."/>
        </authorList>
    </citation>
    <scope>SUBCELLULAR LOCATION [LARGE SCALE ANALYSIS]</scope>
</reference>
<organism>
    <name type="scientific">Schizosaccharomyces pombe (strain 972 / ATCC 24843)</name>
    <name type="common">Fission yeast</name>
    <dbReference type="NCBI Taxonomy" id="284812"/>
    <lineage>
        <taxon>Eukaryota</taxon>
        <taxon>Fungi</taxon>
        <taxon>Dikarya</taxon>
        <taxon>Ascomycota</taxon>
        <taxon>Taphrinomycotina</taxon>
        <taxon>Schizosaccharomycetes</taxon>
        <taxon>Schizosaccharomycetales</taxon>
        <taxon>Schizosaccharomycetaceae</taxon>
        <taxon>Schizosaccharomyces</taxon>
    </lineage>
</organism>
<feature type="chain" id="PRO_0000079796" description="Lariat debranching enzyme">
    <location>
        <begin position="1"/>
        <end position="463"/>
    </location>
</feature>
<feature type="region of interest" description="Lariat recognition loop" evidence="1">
    <location>
        <begin position="118"/>
        <end position="148"/>
    </location>
</feature>
<feature type="region of interest" description="Disordered" evidence="3">
    <location>
        <begin position="250"/>
        <end position="324"/>
    </location>
</feature>
<feature type="compositionally biased region" description="Polar residues" evidence="3">
    <location>
        <begin position="256"/>
        <end position="267"/>
    </location>
</feature>
<feature type="compositionally biased region" description="Basic and acidic residues" evidence="3">
    <location>
        <begin position="276"/>
        <end position="289"/>
    </location>
</feature>
<feature type="compositionally biased region" description="Basic and acidic residues" evidence="3">
    <location>
        <begin position="299"/>
        <end position="323"/>
    </location>
</feature>
<feature type="binding site" evidence="1">
    <location>
        <position position="8"/>
    </location>
    <ligand>
        <name>a divalent metal cation</name>
        <dbReference type="ChEBI" id="CHEBI:60240"/>
        <label>1</label>
    </ligand>
</feature>
<feature type="binding site" evidence="1">
    <location>
        <position position="10"/>
    </location>
    <ligand>
        <name>a divalent metal cation</name>
        <dbReference type="ChEBI" id="CHEBI:60240"/>
        <label>1</label>
    </ligand>
</feature>
<feature type="binding site" evidence="1">
    <location>
        <position position="33"/>
    </location>
    <ligand>
        <name>a divalent metal cation</name>
        <dbReference type="ChEBI" id="CHEBI:60240"/>
        <label>2</label>
    </ligand>
</feature>
<feature type="binding site" evidence="1">
    <location>
        <position position="78"/>
    </location>
    <ligand>
        <name>a divalent metal cation</name>
        <dbReference type="ChEBI" id="CHEBI:60240"/>
        <label>2</label>
    </ligand>
</feature>
<feature type="binding site" evidence="1">
    <location>
        <position position="168"/>
    </location>
    <ligand>
        <name>a divalent metal cation</name>
        <dbReference type="ChEBI" id="CHEBI:60240"/>
        <label>2</label>
    </ligand>
</feature>
<feature type="binding site" evidence="1">
    <location>
        <position position="220"/>
    </location>
    <ligand>
        <name>a divalent metal cation</name>
        <dbReference type="ChEBI" id="CHEBI:60240"/>
        <label>2</label>
    </ligand>
</feature>
<feature type="binding site" evidence="1">
    <location>
        <position position="222"/>
    </location>
    <ligand>
        <name>a divalent metal cation</name>
        <dbReference type="ChEBI" id="CHEBI:60240"/>
        <label>1</label>
    </ligand>
</feature>
<protein>
    <recommendedName>
        <fullName>Lariat debranching enzyme</fullName>
        <ecNumber evidence="2">3.1.4.-</ecNumber>
    </recommendedName>
</protein>
<dbReference type="EC" id="3.1.4.-" evidence="2"/>
<dbReference type="EMBL" id="U63635">
    <property type="protein sequence ID" value="AAC49619.2"/>
    <property type="status" value="ALT_INIT"/>
    <property type="molecule type" value="Genomic_DNA"/>
</dbReference>
<dbReference type="EMBL" id="CU329670">
    <property type="protein sequence ID" value="CAK9837702.1"/>
    <property type="molecule type" value="Genomic_DNA"/>
</dbReference>
<dbReference type="PIR" id="T37817">
    <property type="entry name" value="T37817"/>
</dbReference>
<dbReference type="RefSeq" id="NP_593470.2">
    <property type="nucleotide sequence ID" value="NM_001018903.3"/>
</dbReference>
<dbReference type="SMR" id="O13765"/>
<dbReference type="BioGRID" id="278746">
    <property type="interactions" value="187"/>
</dbReference>
<dbReference type="FunCoup" id="O13765">
    <property type="interactions" value="835"/>
</dbReference>
<dbReference type="STRING" id="284812.O13765"/>
<dbReference type="PaxDb" id="4896-SPAC17A5.02c.1"/>
<dbReference type="EnsemblFungi" id="SPAC17A5.02c.1">
    <property type="protein sequence ID" value="SPAC17A5.02c.1:pep"/>
    <property type="gene ID" value="SPAC17A5.02c"/>
</dbReference>
<dbReference type="GeneID" id="2542277"/>
<dbReference type="KEGG" id="spo:2542277"/>
<dbReference type="PomBase" id="SPAC17A5.02c">
    <property type="gene designation" value="dbr1"/>
</dbReference>
<dbReference type="VEuPathDB" id="FungiDB:SPAC17A5.02c"/>
<dbReference type="eggNOG" id="KOG2863">
    <property type="taxonomic scope" value="Eukaryota"/>
</dbReference>
<dbReference type="HOGENOM" id="CLU_005893_1_0_1"/>
<dbReference type="InParanoid" id="O13765"/>
<dbReference type="OMA" id="KWWFSAH"/>
<dbReference type="PhylomeDB" id="O13765"/>
<dbReference type="PRO" id="PR:O13765"/>
<dbReference type="Proteomes" id="UP000002485">
    <property type="component" value="Chromosome I"/>
</dbReference>
<dbReference type="GO" id="GO:0005737">
    <property type="term" value="C:cytoplasm"/>
    <property type="evidence" value="ECO:0007669"/>
    <property type="project" value="UniProtKB-SubCell"/>
</dbReference>
<dbReference type="GO" id="GO:0005634">
    <property type="term" value="C:nucleus"/>
    <property type="evidence" value="ECO:0007005"/>
    <property type="project" value="PomBase"/>
</dbReference>
<dbReference type="GO" id="GO:0005681">
    <property type="term" value="C:spliceosomal complex"/>
    <property type="evidence" value="ECO:0000305"/>
    <property type="project" value="PomBase"/>
</dbReference>
<dbReference type="GO" id="GO:0046872">
    <property type="term" value="F:metal ion binding"/>
    <property type="evidence" value="ECO:0007669"/>
    <property type="project" value="UniProtKB-KW"/>
</dbReference>
<dbReference type="GO" id="GO:0008419">
    <property type="term" value="F:RNA lariat debranching enzyme activity"/>
    <property type="evidence" value="ECO:0000316"/>
    <property type="project" value="PomBase"/>
</dbReference>
<dbReference type="GO" id="GO:0045292">
    <property type="term" value="P:mRNA cis splicing, via spliceosome"/>
    <property type="evidence" value="ECO:0000315"/>
    <property type="project" value="PomBase"/>
</dbReference>
<dbReference type="GO" id="GO:0000398">
    <property type="term" value="P:mRNA splicing, via spliceosome"/>
    <property type="evidence" value="ECO:0000318"/>
    <property type="project" value="GO_Central"/>
</dbReference>
<dbReference type="CDD" id="cd00844">
    <property type="entry name" value="MPP_Dbr1_N"/>
    <property type="match status" value="1"/>
</dbReference>
<dbReference type="FunFam" id="3.60.21.10:FF:000035">
    <property type="entry name" value="Lariat debranching enzyme"/>
    <property type="match status" value="1"/>
</dbReference>
<dbReference type="Gene3D" id="3.60.21.10">
    <property type="match status" value="1"/>
</dbReference>
<dbReference type="InterPro" id="IPR004843">
    <property type="entry name" value="Calcineurin-like_PHP_ApaH"/>
</dbReference>
<dbReference type="InterPro" id="IPR007708">
    <property type="entry name" value="DBR1_C"/>
</dbReference>
<dbReference type="InterPro" id="IPR041816">
    <property type="entry name" value="Dbr1_N"/>
</dbReference>
<dbReference type="InterPro" id="IPR029052">
    <property type="entry name" value="Metallo-depent_PP-like"/>
</dbReference>
<dbReference type="PANTHER" id="PTHR12849:SF0">
    <property type="entry name" value="LARIAT DEBRANCHING ENZYME"/>
    <property type="match status" value="1"/>
</dbReference>
<dbReference type="PANTHER" id="PTHR12849">
    <property type="entry name" value="RNA LARIAT DEBRANCHING ENZYME"/>
    <property type="match status" value="1"/>
</dbReference>
<dbReference type="Pfam" id="PF05011">
    <property type="entry name" value="DBR1"/>
    <property type="match status" value="1"/>
</dbReference>
<dbReference type="Pfam" id="PF00149">
    <property type="entry name" value="Metallophos"/>
    <property type="match status" value="1"/>
</dbReference>
<dbReference type="SMART" id="SM01124">
    <property type="entry name" value="DBR1"/>
    <property type="match status" value="1"/>
</dbReference>
<dbReference type="SUPFAM" id="SSF56300">
    <property type="entry name" value="Metallo-dependent phosphatases"/>
    <property type="match status" value="1"/>
</dbReference>
<gene>
    <name type="primary">dbr1</name>
    <name evidence="6" type="ORF">SPAC17A5.02c</name>
</gene>
<keyword id="KW-0963">Cytoplasm</keyword>
<keyword id="KW-0378">Hydrolase</keyword>
<keyword id="KW-0408">Iron</keyword>
<keyword id="KW-0464">Manganese</keyword>
<keyword id="KW-0479">Metal-binding</keyword>
<keyword id="KW-0507">mRNA processing</keyword>
<keyword id="KW-0539">Nucleus</keyword>
<keyword id="KW-1185">Reference proteome</keyword>
<keyword id="KW-0862">Zinc</keyword>
<proteinExistence type="inferred from homology"/>
<sequence length="463" mass="52817">MRVGVQGCCHGILDNLYILAEKRKVDLLIIGGDFQALRNVSDYHGISMPPKFKRLGDFFNYYNGRNKAPILTIFVGGNHEASNYLDELPYGGWVAPNIYYMGRSSVINVGGLRIAGISGIYSAMDYKKGRYEGLPYNYKMLKSIYHTREFDVLSLKSLQKPIDIFLSHDWPRGIEQHGDVAKLLRHKPFFRNEVERNDLGSPALEELLVELKPRYWMAAHLHTKFTAVVHHNSQEDDGKLSCSSKDVTSSGFSMKGLNEPSQERLPVEKEQNDKSDEEGSNNEQEEKQDKKQSTNRDLCRKESCKKEPSLSSSDQVTKFLALDKCLPRRSYFEVVEIEPVEIPDSGAPYMQYDSEWLSVLRAMHPFQSHTIEQDPPLPSLEVVKTLKRKEEIWVDENLVKKDKLGIPRNFCQTAPPHSRDITENMQPSSYINPQTVAFEILIGLKERTVDSPPPVKNPNEIVL</sequence>